<comment type="function">
    <text evidence="1">Probably involved in nervous system development and function.</text>
</comment>
<comment type="subunit">
    <text evidence="2">Interacts with SCN8A.</text>
</comment>
<comment type="subcellular location">
    <subcellularLocation>
        <location evidence="4">Nucleus</location>
    </subcellularLocation>
</comment>
<comment type="similarity">
    <text evidence="4">Belongs to the heparin-binding growth factors family.</text>
</comment>
<accession>Q8R5L7</accession>
<reference key="1">
    <citation type="submission" date="2002-02" db="EMBL/GenBank/DDBJ databases">
        <title>Rattus norvegicus FGF14 mRNA.</title>
        <authorList>
            <person name="Itoh N."/>
        </authorList>
    </citation>
    <scope>NUCLEOTIDE SEQUENCE [MRNA]</scope>
</reference>
<evidence type="ECO:0000250" key="1"/>
<evidence type="ECO:0000250" key="2">
    <source>
        <dbReference type="UniProtKB" id="Q92915"/>
    </source>
</evidence>
<evidence type="ECO:0000256" key="3">
    <source>
        <dbReference type="SAM" id="MobiDB-lite"/>
    </source>
</evidence>
<evidence type="ECO:0000305" key="4"/>
<sequence>MAAAIASGLIRQKRQAREQHWDRPSASRRRSSPSKNRGLCNGNLVDIFSKVRIFGLKKRRLRRQDPQLKGIVTRLYCRQGYYLQMHPDGALDGTKDDSTNSTLFNLIPVGLRVVAIQGVKTGLYIAMNGEGYLYPSELFTPECKFKESVFENYYVIYSSMLYRQQESGRAWFLGLNKEGQVMKGNRVKKTKPAAHFLPKPLEVAMYREPSLHDVGETVPKAGVTPSKSTSASAIMNGGKPVNKCKTT</sequence>
<name>FGF14_RAT</name>
<proteinExistence type="evidence at transcript level"/>
<gene>
    <name type="primary">Fgf14</name>
</gene>
<protein>
    <recommendedName>
        <fullName>Fibroblast growth factor 14</fullName>
        <shortName>FGF-14</shortName>
    </recommendedName>
</protein>
<feature type="chain" id="PRO_0000147612" description="Fibroblast growth factor 14">
    <location>
        <begin position="1"/>
        <end position="247"/>
    </location>
</feature>
<feature type="region of interest" description="Disordered" evidence="3">
    <location>
        <begin position="1"/>
        <end position="38"/>
    </location>
</feature>
<feature type="region of interest" description="Disordered" evidence="3">
    <location>
        <begin position="216"/>
        <end position="247"/>
    </location>
</feature>
<feature type="compositionally biased region" description="Basic and acidic residues" evidence="3">
    <location>
        <begin position="15"/>
        <end position="25"/>
    </location>
</feature>
<keyword id="KW-0339">Growth factor</keyword>
<keyword id="KW-0539">Nucleus</keyword>
<keyword id="KW-1185">Reference proteome</keyword>
<organism>
    <name type="scientific">Rattus norvegicus</name>
    <name type="common">Rat</name>
    <dbReference type="NCBI Taxonomy" id="10116"/>
    <lineage>
        <taxon>Eukaryota</taxon>
        <taxon>Metazoa</taxon>
        <taxon>Chordata</taxon>
        <taxon>Craniata</taxon>
        <taxon>Vertebrata</taxon>
        <taxon>Euteleostomi</taxon>
        <taxon>Mammalia</taxon>
        <taxon>Eutheria</taxon>
        <taxon>Euarchontoglires</taxon>
        <taxon>Glires</taxon>
        <taxon>Rodentia</taxon>
        <taxon>Myomorpha</taxon>
        <taxon>Muroidea</taxon>
        <taxon>Muridae</taxon>
        <taxon>Murinae</taxon>
        <taxon>Rattus</taxon>
    </lineage>
</organism>
<dbReference type="EMBL" id="AB079500">
    <property type="protein sequence ID" value="BAB84580.1"/>
    <property type="molecule type" value="mRNA"/>
</dbReference>
<dbReference type="RefSeq" id="NP_071559.2">
    <property type="nucleotide sequence ID" value="NM_022223.2"/>
</dbReference>
<dbReference type="SMR" id="Q8R5L7"/>
<dbReference type="FunCoup" id="Q8R5L7">
    <property type="interactions" value="245"/>
</dbReference>
<dbReference type="STRING" id="10116.ENSRNOP00000042838"/>
<dbReference type="PhosphoSitePlus" id="Q8R5L7"/>
<dbReference type="PaxDb" id="10116-ENSRNOP00000042838"/>
<dbReference type="ABCD" id="Q8R5L7">
    <property type="antibodies" value="1 sequenced antibody"/>
</dbReference>
<dbReference type="Ensembl" id="ENSRNOT00000041551.6">
    <property type="protein sequence ID" value="ENSRNOP00000042838.5"/>
    <property type="gene ID" value="ENSRNOG00000009288.9"/>
</dbReference>
<dbReference type="GeneID" id="63851"/>
<dbReference type="KEGG" id="rno:63851"/>
<dbReference type="UCSC" id="RGD:620165">
    <property type="organism name" value="rat"/>
</dbReference>
<dbReference type="AGR" id="RGD:620165"/>
<dbReference type="CTD" id="2259"/>
<dbReference type="RGD" id="620165">
    <property type="gene designation" value="Fgf14"/>
</dbReference>
<dbReference type="eggNOG" id="KOG3885">
    <property type="taxonomic scope" value="Eukaryota"/>
</dbReference>
<dbReference type="GeneTree" id="ENSGT00940000156984"/>
<dbReference type="HOGENOM" id="CLU_081609_2_0_1"/>
<dbReference type="InParanoid" id="Q8R5L7"/>
<dbReference type="OMA" id="KRINSPH"/>
<dbReference type="PhylomeDB" id="Q8R5L7"/>
<dbReference type="TreeFam" id="TF317805"/>
<dbReference type="PRO" id="PR:Q8R5L7"/>
<dbReference type="Proteomes" id="UP000002494">
    <property type="component" value="Chromosome 15"/>
</dbReference>
<dbReference type="Bgee" id="ENSRNOG00000009288">
    <property type="expression patterns" value="Expressed in cerebellum and 3 other cell types or tissues"/>
</dbReference>
<dbReference type="GO" id="GO:0005737">
    <property type="term" value="C:cytoplasm"/>
    <property type="evidence" value="ECO:0000318"/>
    <property type="project" value="GO_Central"/>
</dbReference>
<dbReference type="GO" id="GO:0005829">
    <property type="term" value="C:cytosol"/>
    <property type="evidence" value="ECO:0000266"/>
    <property type="project" value="RGD"/>
</dbReference>
<dbReference type="GO" id="GO:0005634">
    <property type="term" value="C:nucleus"/>
    <property type="evidence" value="ECO:0000266"/>
    <property type="project" value="RGD"/>
</dbReference>
<dbReference type="GO" id="GO:0045202">
    <property type="term" value="C:synapse"/>
    <property type="evidence" value="ECO:0007669"/>
    <property type="project" value="GOC"/>
</dbReference>
<dbReference type="GO" id="GO:0008083">
    <property type="term" value="F:growth factor activity"/>
    <property type="evidence" value="ECO:0000314"/>
    <property type="project" value="RGD"/>
</dbReference>
<dbReference type="GO" id="GO:0017080">
    <property type="term" value="F:sodium channel regulator activity"/>
    <property type="evidence" value="ECO:0000318"/>
    <property type="project" value="GO_Central"/>
</dbReference>
<dbReference type="GO" id="GO:0008344">
    <property type="term" value="P:adult locomotory behavior"/>
    <property type="evidence" value="ECO:0000266"/>
    <property type="project" value="RGD"/>
</dbReference>
<dbReference type="GO" id="GO:0007268">
    <property type="term" value="P:chemical synaptic transmission"/>
    <property type="evidence" value="ECO:0000266"/>
    <property type="project" value="RGD"/>
</dbReference>
<dbReference type="GO" id="GO:0022008">
    <property type="term" value="P:neurogenesis"/>
    <property type="evidence" value="ECO:0000318"/>
    <property type="project" value="GO_Central"/>
</dbReference>
<dbReference type="GO" id="GO:0050905">
    <property type="term" value="P:neuromuscular process"/>
    <property type="evidence" value="ECO:0000266"/>
    <property type="project" value="RGD"/>
</dbReference>
<dbReference type="GO" id="GO:1901843">
    <property type="term" value="P:positive regulation of high voltage-gated calcium channel activity"/>
    <property type="evidence" value="ECO:0000315"/>
    <property type="project" value="MGI"/>
</dbReference>
<dbReference type="GO" id="GO:0010765">
    <property type="term" value="P:positive regulation of sodium ion transport"/>
    <property type="evidence" value="ECO:0000266"/>
    <property type="project" value="RGD"/>
</dbReference>
<dbReference type="GO" id="GO:0060078">
    <property type="term" value="P:regulation of postsynaptic membrane potential"/>
    <property type="evidence" value="ECO:0000314"/>
    <property type="project" value="MGI"/>
</dbReference>
<dbReference type="GO" id="GO:0048167">
    <property type="term" value="P:regulation of synaptic plasticity"/>
    <property type="evidence" value="ECO:0000315"/>
    <property type="project" value="MGI"/>
</dbReference>
<dbReference type="GO" id="GO:1903421">
    <property type="term" value="P:regulation of synaptic vesicle recycling"/>
    <property type="evidence" value="ECO:0000315"/>
    <property type="project" value="MGI"/>
</dbReference>
<dbReference type="CDD" id="cd23330">
    <property type="entry name" value="beta-trefoil_FGF14"/>
    <property type="match status" value="1"/>
</dbReference>
<dbReference type="FunFam" id="2.80.10.50:FF:000001">
    <property type="entry name" value="Fibroblast growth factor"/>
    <property type="match status" value="1"/>
</dbReference>
<dbReference type="Gene3D" id="2.80.10.50">
    <property type="match status" value="1"/>
</dbReference>
<dbReference type="InterPro" id="IPR002209">
    <property type="entry name" value="Fibroblast_GF_fam"/>
</dbReference>
<dbReference type="InterPro" id="IPR008996">
    <property type="entry name" value="IL1/FGF"/>
</dbReference>
<dbReference type="PANTHER" id="PTHR11486">
    <property type="entry name" value="FIBROBLAST GROWTH FACTOR"/>
    <property type="match status" value="1"/>
</dbReference>
<dbReference type="Pfam" id="PF00167">
    <property type="entry name" value="FGF"/>
    <property type="match status" value="1"/>
</dbReference>
<dbReference type="PRINTS" id="PR00263">
    <property type="entry name" value="HBGFFGF"/>
</dbReference>
<dbReference type="PRINTS" id="PR00262">
    <property type="entry name" value="IL1HBGF"/>
</dbReference>
<dbReference type="SMART" id="SM00442">
    <property type="entry name" value="FGF"/>
    <property type="match status" value="1"/>
</dbReference>
<dbReference type="SUPFAM" id="SSF50353">
    <property type="entry name" value="Cytokine"/>
    <property type="match status" value="1"/>
</dbReference>
<dbReference type="PROSITE" id="PS00247">
    <property type="entry name" value="HBGF_FGF"/>
    <property type="match status" value="1"/>
</dbReference>